<feature type="chain" id="PRO_0000068211" description="UPF0229 protein YPO2152/y2169/YP_1953">
    <location>
        <begin position="1"/>
        <end position="424"/>
    </location>
</feature>
<feature type="region of interest" description="Disordered" evidence="2">
    <location>
        <begin position="84"/>
        <end position="109"/>
    </location>
</feature>
<feature type="compositionally biased region" description="Gly residues" evidence="2">
    <location>
        <begin position="92"/>
        <end position="105"/>
    </location>
</feature>
<dbReference type="EMBL" id="AL590842">
    <property type="protein sequence ID" value="CAL20784.1"/>
    <property type="molecule type" value="Genomic_DNA"/>
</dbReference>
<dbReference type="EMBL" id="AE009952">
    <property type="protein sequence ID" value="AAM85731.1"/>
    <property type="status" value="ALT_INIT"/>
    <property type="molecule type" value="Genomic_DNA"/>
</dbReference>
<dbReference type="EMBL" id="AE017042">
    <property type="protein sequence ID" value="AAS62170.1"/>
    <property type="status" value="ALT_INIT"/>
    <property type="molecule type" value="Genomic_DNA"/>
</dbReference>
<dbReference type="PIR" id="AE0262">
    <property type="entry name" value="AE0262"/>
</dbReference>
<dbReference type="RefSeq" id="WP_002216501.1">
    <property type="nucleotide sequence ID" value="NZ_WUCM01000055.1"/>
</dbReference>
<dbReference type="RefSeq" id="YP_002347128.1">
    <property type="nucleotide sequence ID" value="NC_003143.1"/>
</dbReference>
<dbReference type="SMR" id="Q8ZEL2"/>
<dbReference type="IntAct" id="Q8ZEL2">
    <property type="interactions" value="2"/>
</dbReference>
<dbReference type="STRING" id="214092.YPO2152"/>
<dbReference type="PaxDb" id="214092-YPO2152"/>
<dbReference type="DNASU" id="1147116"/>
<dbReference type="EnsemblBacteria" id="AAS62170">
    <property type="protein sequence ID" value="AAS62170"/>
    <property type="gene ID" value="YP_1953"/>
</dbReference>
<dbReference type="KEGG" id="ype:YPO2152"/>
<dbReference type="KEGG" id="ypk:y2169"/>
<dbReference type="KEGG" id="ypm:YP_1953"/>
<dbReference type="PATRIC" id="fig|214092.21.peg.2538"/>
<dbReference type="eggNOG" id="COG2718">
    <property type="taxonomic scope" value="Bacteria"/>
</dbReference>
<dbReference type="HOGENOM" id="CLU_049702_0_0_6"/>
<dbReference type="OMA" id="QYFAYIE"/>
<dbReference type="OrthoDB" id="9788289at2"/>
<dbReference type="Proteomes" id="UP000000815">
    <property type="component" value="Chromosome"/>
</dbReference>
<dbReference type="Proteomes" id="UP000001019">
    <property type="component" value="Chromosome"/>
</dbReference>
<dbReference type="Proteomes" id="UP000002490">
    <property type="component" value="Chromosome"/>
</dbReference>
<dbReference type="HAMAP" id="MF_01232">
    <property type="entry name" value="UPF0229"/>
    <property type="match status" value="1"/>
</dbReference>
<dbReference type="InterPro" id="IPR006698">
    <property type="entry name" value="UPF0229"/>
</dbReference>
<dbReference type="NCBIfam" id="NF003707">
    <property type="entry name" value="PRK05325.1-2"/>
    <property type="match status" value="1"/>
</dbReference>
<dbReference type="NCBIfam" id="NF003708">
    <property type="entry name" value="PRK05325.1-3"/>
    <property type="match status" value="1"/>
</dbReference>
<dbReference type="PANTHER" id="PTHR30510">
    <property type="entry name" value="UPF0229 PROTEIN YEAH"/>
    <property type="match status" value="1"/>
</dbReference>
<dbReference type="PANTHER" id="PTHR30510:SF2">
    <property type="entry name" value="UPF0229 PROTEIN YEAH"/>
    <property type="match status" value="1"/>
</dbReference>
<dbReference type="Pfam" id="PF04285">
    <property type="entry name" value="DUF444"/>
    <property type="match status" value="1"/>
</dbReference>
<protein>
    <recommendedName>
        <fullName evidence="1">UPF0229 protein YPO2152/y2169/YP_1953</fullName>
    </recommendedName>
</protein>
<reference key="1">
    <citation type="journal article" date="2001" name="Nature">
        <title>Genome sequence of Yersinia pestis, the causative agent of plague.</title>
        <authorList>
            <person name="Parkhill J."/>
            <person name="Wren B.W."/>
            <person name="Thomson N.R."/>
            <person name="Titball R.W."/>
            <person name="Holden M.T.G."/>
            <person name="Prentice M.B."/>
            <person name="Sebaihia M."/>
            <person name="James K.D."/>
            <person name="Churcher C.M."/>
            <person name="Mungall K.L."/>
            <person name="Baker S."/>
            <person name="Basham D."/>
            <person name="Bentley S.D."/>
            <person name="Brooks K."/>
            <person name="Cerdeno-Tarraga A.-M."/>
            <person name="Chillingworth T."/>
            <person name="Cronin A."/>
            <person name="Davies R.M."/>
            <person name="Davis P."/>
            <person name="Dougan G."/>
            <person name="Feltwell T."/>
            <person name="Hamlin N."/>
            <person name="Holroyd S."/>
            <person name="Jagels K."/>
            <person name="Karlyshev A.V."/>
            <person name="Leather S."/>
            <person name="Moule S."/>
            <person name="Oyston P.C.F."/>
            <person name="Quail M.A."/>
            <person name="Rutherford K.M."/>
            <person name="Simmonds M."/>
            <person name="Skelton J."/>
            <person name="Stevens K."/>
            <person name="Whitehead S."/>
            <person name="Barrell B.G."/>
        </authorList>
    </citation>
    <scope>NUCLEOTIDE SEQUENCE [LARGE SCALE GENOMIC DNA]</scope>
    <source>
        <strain>CO-92 / Biovar Orientalis</strain>
    </source>
</reference>
<reference key="2">
    <citation type="journal article" date="2002" name="J. Bacteriol.">
        <title>Genome sequence of Yersinia pestis KIM.</title>
        <authorList>
            <person name="Deng W."/>
            <person name="Burland V."/>
            <person name="Plunkett G. III"/>
            <person name="Boutin A."/>
            <person name="Mayhew G.F."/>
            <person name="Liss P."/>
            <person name="Perna N.T."/>
            <person name="Rose D.J."/>
            <person name="Mau B."/>
            <person name="Zhou S."/>
            <person name="Schwartz D.C."/>
            <person name="Fetherston J.D."/>
            <person name="Lindler L.E."/>
            <person name="Brubaker R.R."/>
            <person name="Plano G.V."/>
            <person name="Straley S.C."/>
            <person name="McDonough K.A."/>
            <person name="Nilles M.L."/>
            <person name="Matson J.S."/>
            <person name="Blattner F.R."/>
            <person name="Perry R.D."/>
        </authorList>
    </citation>
    <scope>NUCLEOTIDE SEQUENCE [LARGE SCALE GENOMIC DNA]</scope>
    <source>
        <strain>KIM10+ / Biovar Mediaevalis</strain>
    </source>
</reference>
<reference key="3">
    <citation type="journal article" date="2004" name="DNA Res.">
        <title>Complete genome sequence of Yersinia pestis strain 91001, an isolate avirulent to humans.</title>
        <authorList>
            <person name="Song Y."/>
            <person name="Tong Z."/>
            <person name="Wang J."/>
            <person name="Wang L."/>
            <person name="Guo Z."/>
            <person name="Han Y."/>
            <person name="Zhang J."/>
            <person name="Pei D."/>
            <person name="Zhou D."/>
            <person name="Qin H."/>
            <person name="Pang X."/>
            <person name="Han Y."/>
            <person name="Zhai J."/>
            <person name="Li M."/>
            <person name="Cui B."/>
            <person name="Qi Z."/>
            <person name="Jin L."/>
            <person name="Dai R."/>
            <person name="Chen F."/>
            <person name="Li S."/>
            <person name="Ye C."/>
            <person name="Du Z."/>
            <person name="Lin W."/>
            <person name="Wang J."/>
            <person name="Yu J."/>
            <person name="Yang H."/>
            <person name="Wang J."/>
            <person name="Huang P."/>
            <person name="Yang R."/>
        </authorList>
    </citation>
    <scope>NUCLEOTIDE SEQUENCE [LARGE SCALE GENOMIC DNA]</scope>
    <source>
        <strain>91001 / Biovar Mediaevalis</strain>
    </source>
</reference>
<evidence type="ECO:0000255" key="1">
    <source>
        <dbReference type="HAMAP-Rule" id="MF_01232"/>
    </source>
</evidence>
<evidence type="ECO:0000256" key="2">
    <source>
        <dbReference type="SAM" id="MobiDB-lite"/>
    </source>
</evidence>
<evidence type="ECO:0000305" key="3"/>
<proteinExistence type="inferred from homology"/>
<name>Y2152_YERPE</name>
<gene>
    <name type="ordered locus">YPO2152</name>
    <name type="ordered locus">y2169</name>
    <name type="ordered locus">YP_1953</name>
</gene>
<comment type="similarity">
    <text evidence="1">Belongs to the UPF0229 family.</text>
</comment>
<comment type="sequence caution" evidence="3">
    <conflict type="erroneous initiation">
        <sequence resource="EMBL-CDS" id="AAM85731"/>
    </conflict>
</comment>
<comment type="sequence caution" evidence="3">
    <conflict type="erroneous initiation">
        <sequence resource="EMBL-CDS" id="AAS62170"/>
    </conflict>
</comment>
<accession>Q8ZEL2</accession>
<accession>Q0WF10</accession>
<keyword id="KW-1185">Reference proteome</keyword>
<organism>
    <name type="scientific">Yersinia pestis</name>
    <dbReference type="NCBI Taxonomy" id="632"/>
    <lineage>
        <taxon>Bacteria</taxon>
        <taxon>Pseudomonadati</taxon>
        <taxon>Pseudomonadota</taxon>
        <taxon>Gammaproteobacteria</taxon>
        <taxon>Enterobacterales</taxon>
        <taxon>Yersiniaceae</taxon>
        <taxon>Yersinia</taxon>
    </lineage>
</organism>
<sequence>MGYFIDRRLNGKNKSMVNRQRFLRRYKSQIKQSIADAINKRSVTDIESGESVSIPIDDINEPMFHQGNGGLRHRVHPGNDHFITNDRVDRPQGGGGGGSGQGNAGKDGEGEDEFVFQISKDEYLDLLFEDLALPNLKRNQYKQLAEFKTHRAGYTSNGVPANISVVRSLQNSLARRTAMTASKRRELRELEAALTVLENSEPAQLLEEERLRKAITELKQKIARVPFIDTFDLRYKNYERRPEPSSQAVMFCLMDVSGSMDQATKDMAKRFYILLYLFLSRTYKNVDVVYIRHHTQAKEVDEQEFFYSQETGGTIVSSALKLMDEVVQERYNPAQWNIYAAQASDGDNWADDSPLCHELLAKKILPVVRYYSYIEITRRAHQTLWREYEDLEEKFDNFAIQHIREPEDIYPVFRELFHKQTVDN</sequence>